<evidence type="ECO:0000255" key="1">
    <source>
        <dbReference type="HAMAP-Rule" id="MF_01007"/>
    </source>
</evidence>
<evidence type="ECO:0000256" key="2">
    <source>
        <dbReference type="SAM" id="MobiDB-lite"/>
    </source>
</evidence>
<dbReference type="EC" id="2.1.1.199" evidence="1"/>
<dbReference type="EMBL" id="AE017308">
    <property type="protein sequence ID" value="AAT27866.1"/>
    <property type="molecule type" value="Genomic_DNA"/>
</dbReference>
<dbReference type="RefSeq" id="WP_011264900.1">
    <property type="nucleotide sequence ID" value="NC_006908.1"/>
</dbReference>
<dbReference type="SMR" id="Q6KHR2"/>
<dbReference type="STRING" id="267748.MMOB3800"/>
<dbReference type="KEGG" id="mmo:MMOB3800"/>
<dbReference type="eggNOG" id="COG0275">
    <property type="taxonomic scope" value="Bacteria"/>
</dbReference>
<dbReference type="HOGENOM" id="CLU_038422_2_0_14"/>
<dbReference type="OrthoDB" id="9806637at2"/>
<dbReference type="Proteomes" id="UP000009072">
    <property type="component" value="Chromosome"/>
</dbReference>
<dbReference type="GO" id="GO:0005737">
    <property type="term" value="C:cytoplasm"/>
    <property type="evidence" value="ECO:0007669"/>
    <property type="project" value="UniProtKB-SubCell"/>
</dbReference>
<dbReference type="GO" id="GO:0071424">
    <property type="term" value="F:rRNA (cytosine-N4-)-methyltransferase activity"/>
    <property type="evidence" value="ECO:0007669"/>
    <property type="project" value="UniProtKB-UniRule"/>
</dbReference>
<dbReference type="GO" id="GO:0070475">
    <property type="term" value="P:rRNA base methylation"/>
    <property type="evidence" value="ECO:0007669"/>
    <property type="project" value="UniProtKB-UniRule"/>
</dbReference>
<dbReference type="Gene3D" id="1.10.150.170">
    <property type="entry name" value="Putative methyltransferase TM0872, insert domain"/>
    <property type="match status" value="1"/>
</dbReference>
<dbReference type="Gene3D" id="3.40.50.150">
    <property type="entry name" value="Vaccinia Virus protein VP39"/>
    <property type="match status" value="1"/>
</dbReference>
<dbReference type="HAMAP" id="MF_01007">
    <property type="entry name" value="16SrRNA_methyltr_H"/>
    <property type="match status" value="1"/>
</dbReference>
<dbReference type="InterPro" id="IPR002903">
    <property type="entry name" value="RsmH"/>
</dbReference>
<dbReference type="InterPro" id="IPR023397">
    <property type="entry name" value="SAM-dep_MeTrfase_MraW_recog"/>
</dbReference>
<dbReference type="InterPro" id="IPR029063">
    <property type="entry name" value="SAM-dependent_MTases_sf"/>
</dbReference>
<dbReference type="NCBIfam" id="TIGR00006">
    <property type="entry name" value="16S rRNA (cytosine(1402)-N(4))-methyltransferase RsmH"/>
    <property type="match status" value="1"/>
</dbReference>
<dbReference type="PANTHER" id="PTHR11265:SF0">
    <property type="entry name" value="12S RRNA N4-METHYLCYTIDINE METHYLTRANSFERASE"/>
    <property type="match status" value="1"/>
</dbReference>
<dbReference type="PANTHER" id="PTHR11265">
    <property type="entry name" value="S-ADENOSYL-METHYLTRANSFERASE MRAW"/>
    <property type="match status" value="1"/>
</dbReference>
<dbReference type="Pfam" id="PF01795">
    <property type="entry name" value="Methyltransf_5"/>
    <property type="match status" value="1"/>
</dbReference>
<dbReference type="PIRSF" id="PIRSF004486">
    <property type="entry name" value="MraW"/>
    <property type="match status" value="1"/>
</dbReference>
<dbReference type="SUPFAM" id="SSF81799">
    <property type="entry name" value="Putative methyltransferase TM0872, insert domain"/>
    <property type="match status" value="1"/>
</dbReference>
<dbReference type="SUPFAM" id="SSF53335">
    <property type="entry name" value="S-adenosyl-L-methionine-dependent methyltransferases"/>
    <property type="match status" value="1"/>
</dbReference>
<organism>
    <name type="scientific">Mycoplasma mobile (strain ATCC 43663 / 163K / NCTC 11711)</name>
    <name type="common">Mesomycoplasma mobile</name>
    <dbReference type="NCBI Taxonomy" id="267748"/>
    <lineage>
        <taxon>Bacteria</taxon>
        <taxon>Bacillati</taxon>
        <taxon>Mycoplasmatota</taxon>
        <taxon>Mycoplasmoidales</taxon>
        <taxon>Metamycoplasmataceae</taxon>
        <taxon>Mesomycoplasma</taxon>
    </lineage>
</organism>
<keyword id="KW-0963">Cytoplasm</keyword>
<keyword id="KW-0489">Methyltransferase</keyword>
<keyword id="KW-1185">Reference proteome</keyword>
<keyword id="KW-0698">rRNA processing</keyword>
<keyword id="KW-0949">S-adenosyl-L-methionine</keyword>
<keyword id="KW-0808">Transferase</keyword>
<protein>
    <recommendedName>
        <fullName evidence="1">Ribosomal RNA small subunit methyltransferase H</fullName>
        <ecNumber evidence="1">2.1.1.199</ecNumber>
    </recommendedName>
    <alternativeName>
        <fullName evidence="1">16S rRNA m(4)C1402 methyltransferase</fullName>
    </alternativeName>
    <alternativeName>
        <fullName evidence="1">rRNA (cytosine-N(4)-)-methyltransferase RsmH</fullName>
    </alternativeName>
</protein>
<accession>Q6KHR2</accession>
<gene>
    <name evidence="1" type="primary">rsmH</name>
    <name type="synonym">mraW</name>
    <name type="ordered locus">MMOB3800</name>
</gene>
<comment type="function">
    <text evidence="1">Specifically methylates the N4 position of cytidine in position 1402 (C1402) of 16S rRNA.</text>
</comment>
<comment type="catalytic activity">
    <reaction evidence="1">
        <text>cytidine(1402) in 16S rRNA + S-adenosyl-L-methionine = N(4)-methylcytidine(1402) in 16S rRNA + S-adenosyl-L-homocysteine + H(+)</text>
        <dbReference type="Rhea" id="RHEA:42928"/>
        <dbReference type="Rhea" id="RHEA-COMP:10286"/>
        <dbReference type="Rhea" id="RHEA-COMP:10287"/>
        <dbReference type="ChEBI" id="CHEBI:15378"/>
        <dbReference type="ChEBI" id="CHEBI:57856"/>
        <dbReference type="ChEBI" id="CHEBI:59789"/>
        <dbReference type="ChEBI" id="CHEBI:74506"/>
        <dbReference type="ChEBI" id="CHEBI:82748"/>
        <dbReference type="EC" id="2.1.1.199"/>
    </reaction>
</comment>
<comment type="subcellular location">
    <subcellularLocation>
        <location evidence="1">Cytoplasm</location>
    </subcellularLocation>
</comment>
<comment type="similarity">
    <text evidence="1">Belongs to the methyltransferase superfamily. RsmH family.</text>
</comment>
<name>RSMH_MYCM1</name>
<reference key="1">
    <citation type="journal article" date="2004" name="Genome Res.">
        <title>The complete genome and proteome of Mycoplasma mobile.</title>
        <authorList>
            <person name="Jaffe J.D."/>
            <person name="Stange-Thomann N."/>
            <person name="Smith C."/>
            <person name="DeCaprio D."/>
            <person name="Fisher S."/>
            <person name="Butler J."/>
            <person name="Calvo S."/>
            <person name="Elkins T."/>
            <person name="FitzGerald M.G."/>
            <person name="Hafez N."/>
            <person name="Kodira C.D."/>
            <person name="Major J."/>
            <person name="Wang S."/>
            <person name="Wilkinson J."/>
            <person name="Nicol R."/>
            <person name="Nusbaum C."/>
            <person name="Birren B."/>
            <person name="Berg H.C."/>
            <person name="Church G.M."/>
        </authorList>
    </citation>
    <scope>NUCLEOTIDE SEQUENCE [LARGE SCALE GENOMIC DNA]</scope>
    <source>
        <strain>ATCC 43663 / NCTC 11711 / 163 K</strain>
    </source>
</reference>
<sequence>MESNVHIPILLNEVLSAFNLKETDVVIDLTLGRAGHSQEMLKKIPKGLLIGIDKDKSAITFSKEKLEQIGSNFKLFHSDFSKISDLLKELKISKVNAILIDLGISSPQIDNANRGFSYNKESRLDMRMNLDQKLDAHFIVNSYSEEQLKNLLYRNAEIKNSRQIAKIITSNRPIETTLQLSVILKKYLPAFIVRKKDPSKAVFQALRVEVNDEINSLNFLLKNLVSILEENGKVAIITFNSIEDRIVKKYFGSFIKDDVLAFLPTKKEKEFEVKTYLPSKKELEENPRSKSAKMRVLKKIER</sequence>
<proteinExistence type="inferred from homology"/>
<feature type="chain" id="PRO_0000108661" description="Ribosomal RNA small subunit methyltransferase H">
    <location>
        <begin position="1"/>
        <end position="302"/>
    </location>
</feature>
<feature type="region of interest" description="Disordered" evidence="2">
    <location>
        <begin position="283"/>
        <end position="302"/>
    </location>
</feature>
<feature type="compositionally biased region" description="Basic residues" evidence="2">
    <location>
        <begin position="290"/>
        <end position="302"/>
    </location>
</feature>
<feature type="binding site" evidence="1">
    <location>
        <begin position="34"/>
        <end position="36"/>
    </location>
    <ligand>
        <name>S-adenosyl-L-methionine</name>
        <dbReference type="ChEBI" id="CHEBI:59789"/>
    </ligand>
</feature>
<feature type="binding site" evidence="1">
    <location>
        <position position="53"/>
    </location>
    <ligand>
        <name>S-adenosyl-L-methionine</name>
        <dbReference type="ChEBI" id="CHEBI:59789"/>
    </ligand>
</feature>
<feature type="binding site" evidence="1">
    <location>
        <position position="80"/>
    </location>
    <ligand>
        <name>S-adenosyl-L-methionine</name>
        <dbReference type="ChEBI" id="CHEBI:59789"/>
    </ligand>
</feature>
<feature type="binding site" evidence="1">
    <location>
        <position position="101"/>
    </location>
    <ligand>
        <name>S-adenosyl-L-methionine</name>
        <dbReference type="ChEBI" id="CHEBI:59789"/>
    </ligand>
</feature>
<feature type="binding site" evidence="1">
    <location>
        <position position="108"/>
    </location>
    <ligand>
        <name>S-adenosyl-L-methionine</name>
        <dbReference type="ChEBI" id="CHEBI:59789"/>
    </ligand>
</feature>